<sequence>MGNNKSGSEDNHKVWEVNESSKCPFMGGALNKTAGKGTSNRDWWPNQLNLNILRQNSSLINPMDDGFNYAEAFKSLDLNAVKQDIYDLMTNSQDWWPADYGHYGPFFIRMAWHSAGTYRIGDGRGGAGSGQQRFAPLNSWPDNANLDKARLLLWPVKKKYGKNLSWADLLVLAGNCAHESMGLKMFGFAGGREDVWEPAQDVYWGAETEWLNNDERYAGEELENPLGAAHMGLIYVNPEGHNGNPDPVEAASYIRETFGRMAMNDYETVALIAGGHTFGKTHGAADAEEYVEAEPAAAGIESQGLGWKNTFGTGNGADTITSGIEGAWTDTPTKWSNKYFDNLFKYDWECIKGPGGAYQWQPKDNAGAGTVPDAHDPDKKHAPFMLTTDLSLKMDPEYEKISRHFYENPDEFADAYSRAWFKLTHRDMGPIERYLGPEVPKEELLWQDPIPKVDHEIINDSDIASLKNKILNTGLSVQELVTTAWGSASTFRGSDKRGGANGGRIRLAPQNGWEVNNPKQLGKVIDTLEKIQQDFNESQSGSKKVSIADLIVLAGCVGVEKAAKTAGHELKVPFSPGRADASQEQTDVEAFEPLEPNADGFRNYFRNRDHVSASAEELLVDRAQLLTLTVPQMTVLLGGMRAMGANYDGSKKGVFTDRPGQLTNDFFKNILEMGLTWKSSSDSETEFDGSDRKTGDVKWTGSRADLIFGSNSELRAIAEVYGTDDVEAKFVKDFVKAWDKVMNLDRYDLK</sequence>
<reference key="1">
    <citation type="journal article" date="2006" name="Environ. Microbiol.">
        <title>Whole genome analysis of the marine Bacteroidetes'Gramella forsetii' reveals adaptations to degradation of polymeric organic matter.</title>
        <authorList>
            <person name="Bauer M."/>
            <person name="Kube M."/>
            <person name="Teeling H."/>
            <person name="Richter M."/>
            <person name="Lombardot T."/>
            <person name="Allers E."/>
            <person name="Wuerdemann C.A."/>
            <person name="Quast C."/>
            <person name="Kuhl H."/>
            <person name="Knaust F."/>
            <person name="Woebken D."/>
            <person name="Bischof K."/>
            <person name="Mussmann M."/>
            <person name="Choudhuri J.V."/>
            <person name="Meyer F."/>
            <person name="Reinhardt R."/>
            <person name="Amann R.I."/>
            <person name="Gloeckner F.O."/>
        </authorList>
    </citation>
    <scope>NUCLEOTIDE SEQUENCE [LARGE SCALE GENOMIC DNA]</scope>
    <source>
        <strain>DSM 17595 / CGMCC 1.15422 / KT0803</strain>
    </source>
</reference>
<protein>
    <recommendedName>
        <fullName evidence="1">Catalase-peroxidase</fullName>
        <shortName evidence="1">CP</shortName>
        <ecNumber evidence="1">1.11.1.21</ecNumber>
    </recommendedName>
    <alternativeName>
        <fullName evidence="1">Peroxidase/catalase</fullName>
    </alternativeName>
</protein>
<organism>
    <name type="scientific">Christiangramia forsetii (strain DSM 17595 / CGMCC 1.15422 / KT0803)</name>
    <name type="common">Gramella forsetii</name>
    <dbReference type="NCBI Taxonomy" id="411154"/>
    <lineage>
        <taxon>Bacteria</taxon>
        <taxon>Pseudomonadati</taxon>
        <taxon>Bacteroidota</taxon>
        <taxon>Flavobacteriia</taxon>
        <taxon>Flavobacteriales</taxon>
        <taxon>Flavobacteriaceae</taxon>
        <taxon>Christiangramia</taxon>
    </lineage>
</organism>
<proteinExistence type="inferred from homology"/>
<comment type="function">
    <text evidence="1">Bifunctional enzyme with both catalase and broad-spectrum peroxidase activity.</text>
</comment>
<comment type="catalytic activity">
    <reaction evidence="1">
        <text>H2O2 + AH2 = A + 2 H2O</text>
        <dbReference type="Rhea" id="RHEA:30275"/>
        <dbReference type="ChEBI" id="CHEBI:13193"/>
        <dbReference type="ChEBI" id="CHEBI:15377"/>
        <dbReference type="ChEBI" id="CHEBI:16240"/>
        <dbReference type="ChEBI" id="CHEBI:17499"/>
        <dbReference type="EC" id="1.11.1.21"/>
    </reaction>
</comment>
<comment type="catalytic activity">
    <reaction evidence="1">
        <text>2 H2O2 = O2 + 2 H2O</text>
        <dbReference type="Rhea" id="RHEA:20309"/>
        <dbReference type="ChEBI" id="CHEBI:15377"/>
        <dbReference type="ChEBI" id="CHEBI:15379"/>
        <dbReference type="ChEBI" id="CHEBI:16240"/>
        <dbReference type="EC" id="1.11.1.21"/>
    </reaction>
</comment>
<comment type="cofactor">
    <cofactor evidence="1">
        <name>heme b</name>
        <dbReference type="ChEBI" id="CHEBI:60344"/>
    </cofactor>
    <text evidence="1">Binds 1 heme b (iron(II)-protoporphyrin IX) group per dimer.</text>
</comment>
<comment type="subunit">
    <text evidence="1">Homodimer or homotetramer.</text>
</comment>
<comment type="PTM">
    <text evidence="1">Formation of the three residue Trp-Tyr-Met cross-link is important for the catalase, but not the peroxidase activity of the enzyme.</text>
</comment>
<comment type="similarity">
    <text evidence="1">Belongs to the peroxidase family. Peroxidase/catalase subfamily.</text>
</comment>
<gene>
    <name evidence="1" type="primary">katG</name>
    <name type="ordered locus">GFO_0850</name>
</gene>
<name>KATG_CHRFK</name>
<dbReference type="EC" id="1.11.1.21" evidence="1"/>
<dbReference type="EMBL" id="CU207366">
    <property type="protein sequence ID" value="CAL65824.1"/>
    <property type="molecule type" value="Genomic_DNA"/>
</dbReference>
<dbReference type="RefSeq" id="WP_011708761.1">
    <property type="nucleotide sequence ID" value="NC_008571.1"/>
</dbReference>
<dbReference type="SMR" id="A0LZM9"/>
<dbReference type="STRING" id="411154.GFO_0850"/>
<dbReference type="PeroxiBase" id="6253">
    <property type="entry name" value="GfoCP01"/>
</dbReference>
<dbReference type="KEGG" id="gfo:GFO_0850"/>
<dbReference type="eggNOG" id="COG0376">
    <property type="taxonomic scope" value="Bacteria"/>
</dbReference>
<dbReference type="HOGENOM" id="CLU_025424_2_0_10"/>
<dbReference type="OrthoDB" id="9759743at2"/>
<dbReference type="Proteomes" id="UP000000755">
    <property type="component" value="Chromosome"/>
</dbReference>
<dbReference type="GO" id="GO:0005829">
    <property type="term" value="C:cytosol"/>
    <property type="evidence" value="ECO:0007669"/>
    <property type="project" value="TreeGrafter"/>
</dbReference>
<dbReference type="GO" id="GO:0004096">
    <property type="term" value="F:catalase activity"/>
    <property type="evidence" value="ECO:0007669"/>
    <property type="project" value="UniProtKB-UniRule"/>
</dbReference>
<dbReference type="GO" id="GO:0020037">
    <property type="term" value="F:heme binding"/>
    <property type="evidence" value="ECO:0007669"/>
    <property type="project" value="InterPro"/>
</dbReference>
<dbReference type="GO" id="GO:0046872">
    <property type="term" value="F:metal ion binding"/>
    <property type="evidence" value="ECO:0007669"/>
    <property type="project" value="UniProtKB-KW"/>
</dbReference>
<dbReference type="GO" id="GO:0070301">
    <property type="term" value="P:cellular response to hydrogen peroxide"/>
    <property type="evidence" value="ECO:0007669"/>
    <property type="project" value="TreeGrafter"/>
</dbReference>
<dbReference type="GO" id="GO:0042744">
    <property type="term" value="P:hydrogen peroxide catabolic process"/>
    <property type="evidence" value="ECO:0007669"/>
    <property type="project" value="UniProtKB-KW"/>
</dbReference>
<dbReference type="CDD" id="cd00649">
    <property type="entry name" value="catalase_peroxidase_1"/>
    <property type="match status" value="1"/>
</dbReference>
<dbReference type="CDD" id="cd08200">
    <property type="entry name" value="catalase_peroxidase_2"/>
    <property type="match status" value="1"/>
</dbReference>
<dbReference type="FunFam" id="1.10.420.10:FF:000002">
    <property type="entry name" value="Catalase-peroxidase"/>
    <property type="match status" value="1"/>
</dbReference>
<dbReference type="FunFam" id="1.10.420.10:FF:000004">
    <property type="entry name" value="Catalase-peroxidase"/>
    <property type="match status" value="1"/>
</dbReference>
<dbReference type="FunFam" id="1.10.520.10:FF:000002">
    <property type="entry name" value="Catalase-peroxidase"/>
    <property type="match status" value="1"/>
</dbReference>
<dbReference type="Gene3D" id="1.10.520.10">
    <property type="match status" value="2"/>
</dbReference>
<dbReference type="Gene3D" id="1.10.420.10">
    <property type="entry name" value="Peroxidase, domain 2"/>
    <property type="match status" value="2"/>
</dbReference>
<dbReference type="HAMAP" id="MF_01961">
    <property type="entry name" value="Catal_peroxid"/>
    <property type="match status" value="1"/>
</dbReference>
<dbReference type="InterPro" id="IPR000763">
    <property type="entry name" value="Catalase_peroxidase"/>
</dbReference>
<dbReference type="InterPro" id="IPR002016">
    <property type="entry name" value="Haem_peroxidase"/>
</dbReference>
<dbReference type="InterPro" id="IPR010255">
    <property type="entry name" value="Haem_peroxidase_sf"/>
</dbReference>
<dbReference type="InterPro" id="IPR019794">
    <property type="entry name" value="Peroxidases_AS"/>
</dbReference>
<dbReference type="InterPro" id="IPR019793">
    <property type="entry name" value="Peroxidases_heam-ligand_BS"/>
</dbReference>
<dbReference type="NCBIfam" id="TIGR00198">
    <property type="entry name" value="cat_per_HPI"/>
    <property type="match status" value="1"/>
</dbReference>
<dbReference type="NCBIfam" id="NF011635">
    <property type="entry name" value="PRK15061.1"/>
    <property type="match status" value="1"/>
</dbReference>
<dbReference type="PANTHER" id="PTHR30555:SF0">
    <property type="entry name" value="CATALASE-PEROXIDASE"/>
    <property type="match status" value="1"/>
</dbReference>
<dbReference type="PANTHER" id="PTHR30555">
    <property type="entry name" value="HYDROPEROXIDASE I, BIFUNCTIONAL CATALASE-PEROXIDASE"/>
    <property type="match status" value="1"/>
</dbReference>
<dbReference type="Pfam" id="PF00141">
    <property type="entry name" value="peroxidase"/>
    <property type="match status" value="2"/>
</dbReference>
<dbReference type="PRINTS" id="PR00460">
    <property type="entry name" value="BPEROXIDASE"/>
</dbReference>
<dbReference type="PRINTS" id="PR00458">
    <property type="entry name" value="PEROXIDASE"/>
</dbReference>
<dbReference type="SUPFAM" id="SSF48113">
    <property type="entry name" value="Heme-dependent peroxidases"/>
    <property type="match status" value="2"/>
</dbReference>
<dbReference type="PROSITE" id="PS00435">
    <property type="entry name" value="PEROXIDASE_1"/>
    <property type="match status" value="1"/>
</dbReference>
<dbReference type="PROSITE" id="PS00436">
    <property type="entry name" value="PEROXIDASE_2"/>
    <property type="match status" value="1"/>
</dbReference>
<dbReference type="PROSITE" id="PS50873">
    <property type="entry name" value="PEROXIDASE_4"/>
    <property type="match status" value="1"/>
</dbReference>
<evidence type="ECO:0000255" key="1">
    <source>
        <dbReference type="HAMAP-Rule" id="MF_01961"/>
    </source>
</evidence>
<keyword id="KW-0349">Heme</keyword>
<keyword id="KW-0376">Hydrogen peroxide</keyword>
<keyword id="KW-0408">Iron</keyword>
<keyword id="KW-0479">Metal-binding</keyword>
<keyword id="KW-0560">Oxidoreductase</keyword>
<keyword id="KW-0575">Peroxidase</keyword>
<accession>A0LZM9</accession>
<feature type="chain" id="PRO_0000354804" description="Catalase-peroxidase">
    <location>
        <begin position="1"/>
        <end position="750"/>
    </location>
</feature>
<feature type="active site" description="Proton acceptor" evidence="1">
    <location>
        <position position="113"/>
    </location>
</feature>
<feature type="binding site" description="axial binding residue" evidence="1">
    <location>
        <position position="276"/>
    </location>
    <ligand>
        <name>heme b</name>
        <dbReference type="ChEBI" id="CHEBI:60344"/>
    </ligand>
    <ligandPart>
        <name>Fe</name>
        <dbReference type="ChEBI" id="CHEBI:18248"/>
    </ligandPart>
</feature>
<feature type="site" description="Transition state stabilizer" evidence="1">
    <location>
        <position position="109"/>
    </location>
</feature>
<feature type="cross-link" description="Tryptophyl-tyrosyl-methioninium (Trp-Tyr) (with M-261)" evidence="1">
    <location>
        <begin position="112"/>
        <end position="235"/>
    </location>
</feature>
<feature type="cross-link" description="Tryptophyl-tyrosyl-methioninium (Tyr-Met) (with W-112)" evidence="1">
    <location>
        <begin position="235"/>
        <end position="261"/>
    </location>
</feature>